<sequence length="166" mass="18526">MEASGEKAAVVRRLMEAKEVSGKTFSGIAAETGLTNVYVAQLLRRQAQLKADTVPALRAALPTLTDDLIELMMQPPFRSYHPNIVHEPAIYRLNEAVMHFGESIKEIINEEFGDGIMSAIDFYCSVDKVEGADGKDRVVVTFDGKYLPYTEQKSEHMMSRPTRKTS</sequence>
<organism>
    <name type="scientific">Zea mays</name>
    <name type="common">Maize</name>
    <dbReference type="NCBI Taxonomy" id="4577"/>
    <lineage>
        <taxon>Eukaryota</taxon>
        <taxon>Viridiplantae</taxon>
        <taxon>Streptophyta</taxon>
        <taxon>Embryophyta</taxon>
        <taxon>Tracheophyta</taxon>
        <taxon>Spermatophyta</taxon>
        <taxon>Magnoliopsida</taxon>
        <taxon>Liliopsida</taxon>
        <taxon>Poales</taxon>
        <taxon>Poaceae</taxon>
        <taxon>PACMAD clade</taxon>
        <taxon>Panicoideae</taxon>
        <taxon>Andropogonodae</taxon>
        <taxon>Andropogoneae</taxon>
        <taxon>Tripsacinae</taxon>
        <taxon>Zea</taxon>
    </lineage>
</organism>
<evidence type="ECO:0000255" key="1">
    <source>
        <dbReference type="HAMAP-Rule" id="MF_03139"/>
    </source>
</evidence>
<evidence type="ECO:0000303" key="2">
    <source ref="2"/>
</evidence>
<dbReference type="EC" id="4.2.1.104" evidence="1"/>
<dbReference type="EMBL" id="EU968426">
    <property type="protein sequence ID" value="ACG40544.1"/>
    <property type="molecule type" value="mRNA"/>
</dbReference>
<dbReference type="EMBL" id="BT063810">
    <property type="protein sequence ID" value="ACN28507.1"/>
    <property type="molecule type" value="mRNA"/>
</dbReference>
<dbReference type="EMBL" id="BT084987">
    <property type="protein sequence ID" value="ACR35340.1"/>
    <property type="molecule type" value="mRNA"/>
</dbReference>
<dbReference type="RefSeq" id="NP_001150815.1">
    <molecule id="B6TTW1-1"/>
    <property type="nucleotide sequence ID" value="NM_001157343.2"/>
</dbReference>
<dbReference type="SMR" id="B6TTW1"/>
<dbReference type="FunCoup" id="B6TTW1">
    <property type="interactions" value="1337"/>
</dbReference>
<dbReference type="STRING" id="4577.B6TTW1"/>
<dbReference type="PaxDb" id="4577-GRMZM2G134747_P01"/>
<dbReference type="EnsemblPlants" id="Zm00001eb046120_T002">
    <molecule id="B6TTW1-1"/>
    <property type="protein sequence ID" value="Zm00001eb046120_P002"/>
    <property type="gene ID" value="Zm00001eb046120"/>
</dbReference>
<dbReference type="GeneID" id="100284448"/>
<dbReference type="Gramene" id="Zm00001eb046120_T002">
    <molecule id="B6TTW1-1"/>
    <property type="protein sequence ID" value="Zm00001eb046120_P002"/>
    <property type="gene ID" value="Zm00001eb046120"/>
</dbReference>
<dbReference type="KEGG" id="zma:100284448"/>
<dbReference type="eggNOG" id="ENOG502RY7W">
    <property type="taxonomic scope" value="Eukaryota"/>
</dbReference>
<dbReference type="HOGENOM" id="CLU_103452_2_0_1"/>
<dbReference type="InParanoid" id="B6TTW1"/>
<dbReference type="OMA" id="AIDFKMD"/>
<dbReference type="OrthoDB" id="10019422at2759"/>
<dbReference type="Proteomes" id="UP000007305">
    <property type="component" value="Chromosome 1"/>
</dbReference>
<dbReference type="ExpressionAtlas" id="B6TTW1">
    <property type="expression patterns" value="baseline and differential"/>
</dbReference>
<dbReference type="GO" id="GO:0008824">
    <property type="term" value="F:cyanate hydratase activity"/>
    <property type="evidence" value="ECO:0007669"/>
    <property type="project" value="UniProtKB-UniRule"/>
</dbReference>
<dbReference type="GO" id="GO:0003677">
    <property type="term" value="F:DNA binding"/>
    <property type="evidence" value="ECO:0007669"/>
    <property type="project" value="InterPro"/>
</dbReference>
<dbReference type="GO" id="GO:0042802">
    <property type="term" value="F:identical protein binding"/>
    <property type="evidence" value="ECO:0007669"/>
    <property type="project" value="EnsemblPlants"/>
</dbReference>
<dbReference type="GO" id="GO:0009440">
    <property type="term" value="P:cyanate catabolic process"/>
    <property type="evidence" value="ECO:0007669"/>
    <property type="project" value="EnsemblPlants"/>
</dbReference>
<dbReference type="GO" id="GO:0009651">
    <property type="term" value="P:response to salt stress"/>
    <property type="evidence" value="ECO:0007669"/>
    <property type="project" value="EnsemblPlants"/>
</dbReference>
<dbReference type="CDD" id="cd00559">
    <property type="entry name" value="Cyanase_C"/>
    <property type="match status" value="1"/>
</dbReference>
<dbReference type="FunFam" id="3.30.1160.10:FF:000002">
    <property type="entry name" value="Cyanate hydratase"/>
    <property type="match status" value="1"/>
</dbReference>
<dbReference type="Gene3D" id="3.30.1160.10">
    <property type="entry name" value="Cyanate lyase, C-terminal domain"/>
    <property type="match status" value="1"/>
</dbReference>
<dbReference type="Gene3D" id="1.10.260.40">
    <property type="entry name" value="lambda repressor-like DNA-binding domains"/>
    <property type="match status" value="1"/>
</dbReference>
<dbReference type="HAMAP" id="MF_00535">
    <property type="entry name" value="Cyanate_hydrat"/>
    <property type="match status" value="1"/>
</dbReference>
<dbReference type="InterPro" id="IPR008076">
    <property type="entry name" value="Cyanase"/>
</dbReference>
<dbReference type="InterPro" id="IPR003712">
    <property type="entry name" value="Cyanate_lyase_C"/>
</dbReference>
<dbReference type="InterPro" id="IPR036581">
    <property type="entry name" value="Cyanate_lyase_C_sf"/>
</dbReference>
<dbReference type="InterPro" id="IPR010982">
    <property type="entry name" value="Lambda_DNA-bd_dom_sf"/>
</dbReference>
<dbReference type="NCBIfam" id="TIGR00673">
    <property type="entry name" value="cynS"/>
    <property type="match status" value="1"/>
</dbReference>
<dbReference type="PANTHER" id="PTHR34186">
    <property type="entry name" value="CYANATE HYDRATASE"/>
    <property type="match status" value="1"/>
</dbReference>
<dbReference type="PANTHER" id="PTHR34186:SF2">
    <property type="entry name" value="CYANATE HYDRATASE"/>
    <property type="match status" value="1"/>
</dbReference>
<dbReference type="Pfam" id="PF02560">
    <property type="entry name" value="Cyanate_lyase"/>
    <property type="match status" value="1"/>
</dbReference>
<dbReference type="PIRSF" id="PIRSF001263">
    <property type="entry name" value="Cyanate_hydratas"/>
    <property type="match status" value="1"/>
</dbReference>
<dbReference type="PRINTS" id="PR01693">
    <property type="entry name" value="CYANASE"/>
</dbReference>
<dbReference type="SMART" id="SM01116">
    <property type="entry name" value="Cyanate_lyase"/>
    <property type="match status" value="1"/>
</dbReference>
<dbReference type="SUPFAM" id="SSF55234">
    <property type="entry name" value="Cyanase C-terminal domain"/>
    <property type="match status" value="1"/>
</dbReference>
<dbReference type="SUPFAM" id="SSF47413">
    <property type="entry name" value="lambda repressor-like DNA-binding domains"/>
    <property type="match status" value="1"/>
</dbReference>
<proteinExistence type="evidence at transcript level"/>
<protein>
    <recommendedName>
        <fullName evidence="1">Cyanate hydratase</fullName>
        <shortName evidence="1">Cyanase</shortName>
        <ecNumber evidence="1">4.2.1.104</ecNumber>
    </recommendedName>
    <alternativeName>
        <fullName evidence="1">Cyanate hydrolase</fullName>
    </alternativeName>
    <alternativeName>
        <fullName evidence="1">Cyanate lyase</fullName>
    </alternativeName>
</protein>
<accession>B6TTW1</accession>
<accession>C4J2E0</accession>
<comment type="function">
    <text evidence="1">Catalyzes the reaction of cyanate with bicarbonate to produce ammonia and carbon dioxide.</text>
</comment>
<comment type="catalytic activity">
    <reaction evidence="1">
        <text>cyanate + hydrogencarbonate + 3 H(+) = NH4(+) + 2 CO2</text>
        <dbReference type="Rhea" id="RHEA:11120"/>
        <dbReference type="ChEBI" id="CHEBI:15378"/>
        <dbReference type="ChEBI" id="CHEBI:16526"/>
        <dbReference type="ChEBI" id="CHEBI:17544"/>
        <dbReference type="ChEBI" id="CHEBI:28938"/>
        <dbReference type="ChEBI" id="CHEBI:29195"/>
        <dbReference type="EC" id="4.2.1.104"/>
    </reaction>
</comment>
<comment type="alternative products">
    <event type="alternative splicing"/>
    <isoform>
        <id>B6TTW1-1</id>
        <name>1</name>
        <sequence type="displayed"/>
    </isoform>
    <isoform>
        <id>B6TTW1-2</id>
        <name>2</name>
        <sequence type="described" ref="VSP_040365 VSP_040366"/>
    </isoform>
</comment>
<comment type="similarity">
    <text evidence="1">Belongs to the cyanase family.</text>
</comment>
<gene>
    <name evidence="1" type="primary">CYN</name>
</gene>
<reference key="1">
    <citation type="journal article" date="2009" name="Plant Mol. Biol.">
        <title>Insights into corn genes derived from large-scale cDNA sequencing.</title>
        <authorList>
            <person name="Alexandrov N.N."/>
            <person name="Brover V.V."/>
            <person name="Freidin S."/>
            <person name="Troukhan M.E."/>
            <person name="Tatarinova T.V."/>
            <person name="Zhang H."/>
            <person name="Swaller T.J."/>
            <person name="Lu Y.-P."/>
            <person name="Bouck J."/>
            <person name="Flavell R.B."/>
            <person name="Feldmann K.A."/>
        </authorList>
    </citation>
    <scope>NUCLEOTIDE SEQUENCE [LARGE SCALE MRNA] (ISOFORM 1)</scope>
</reference>
<reference key="2">
    <citation type="submission" date="2009-05" db="EMBL/GenBank/DDBJ databases">
        <title>Maize full-length cDNA project.</title>
        <authorList>
            <person name="Yu Y."/>
            <person name="Currie J."/>
            <person name="Lomeli R."/>
            <person name="Angelova A."/>
            <person name="Collura K."/>
            <person name="Wissotski M."/>
            <person name="Campos D."/>
            <person name="Kudrna D."/>
            <person name="Golser W."/>
            <person name="Ashely E."/>
            <person name="Descour A."/>
            <person name="Fernandes J."/>
            <person name="Soderlund C."/>
            <person name="Walbot V."/>
        </authorList>
    </citation>
    <scope>NUCLEOTIDE SEQUENCE [LARGE SCALE MRNA] (ISOFORMS 1 AND 2)</scope>
    <source>
        <strain>B73</strain>
    </source>
</reference>
<feature type="chain" id="PRO_0000403231" description="Cyanate hydratase">
    <location>
        <begin position="1"/>
        <end position="166"/>
    </location>
</feature>
<feature type="active site" evidence="1">
    <location>
        <position position="92"/>
    </location>
</feature>
<feature type="active site" evidence="1">
    <location>
        <position position="95"/>
    </location>
</feature>
<feature type="active site" evidence="1">
    <location>
        <position position="118"/>
    </location>
</feature>
<feature type="splice variant" id="VSP_040365" description="In isoform 2." evidence="2">
    <original>I</original>
    <variation>M</variation>
    <location>
        <position position="116"/>
    </location>
</feature>
<feature type="splice variant" id="VSP_040366" description="In isoform 2." evidence="2">
    <location>
        <begin position="117"/>
        <end position="166"/>
    </location>
</feature>
<name>CYNS_MAIZE</name>
<keyword id="KW-0025">Alternative splicing</keyword>
<keyword id="KW-0456">Lyase</keyword>
<keyword id="KW-1185">Reference proteome</keyword>